<organism>
    <name type="scientific">Acetivibrio thermocellus (strain ATCC 27405 / DSM 1237 / JCM 9322 / NBRC 103400 / NCIMB 10682 / NRRL B-4536 / VPI 7372)</name>
    <name type="common">Clostridium thermocellum</name>
    <dbReference type="NCBI Taxonomy" id="203119"/>
    <lineage>
        <taxon>Bacteria</taxon>
        <taxon>Bacillati</taxon>
        <taxon>Bacillota</taxon>
        <taxon>Clostridia</taxon>
        <taxon>Eubacteriales</taxon>
        <taxon>Oscillospiraceae</taxon>
        <taxon>Acetivibrio</taxon>
    </lineage>
</organism>
<proteinExistence type="inferred from homology"/>
<comment type="function">
    <text evidence="1">Catalyzes the attachment of tyrosine to tRNA(Tyr) in a two-step reaction: tyrosine is first activated by ATP to form Tyr-AMP and then transferred to the acceptor end of tRNA(Tyr).</text>
</comment>
<comment type="catalytic activity">
    <reaction evidence="1">
        <text>tRNA(Tyr) + L-tyrosine + ATP = L-tyrosyl-tRNA(Tyr) + AMP + diphosphate + H(+)</text>
        <dbReference type="Rhea" id="RHEA:10220"/>
        <dbReference type="Rhea" id="RHEA-COMP:9706"/>
        <dbReference type="Rhea" id="RHEA-COMP:9707"/>
        <dbReference type="ChEBI" id="CHEBI:15378"/>
        <dbReference type="ChEBI" id="CHEBI:30616"/>
        <dbReference type="ChEBI" id="CHEBI:33019"/>
        <dbReference type="ChEBI" id="CHEBI:58315"/>
        <dbReference type="ChEBI" id="CHEBI:78442"/>
        <dbReference type="ChEBI" id="CHEBI:78536"/>
        <dbReference type="ChEBI" id="CHEBI:456215"/>
        <dbReference type="EC" id="6.1.1.1"/>
    </reaction>
</comment>
<comment type="subunit">
    <text evidence="1">Homodimer.</text>
</comment>
<comment type="subcellular location">
    <subcellularLocation>
        <location evidence="1">Cytoplasm</location>
    </subcellularLocation>
</comment>
<comment type="similarity">
    <text evidence="1">Belongs to the class-I aminoacyl-tRNA synthetase family. TyrS type 1 subfamily.</text>
</comment>
<sequence length="408" mass="46638">MSSVFETLKERGYIAQLTHEEKIKELLEKEKITFYIGFDPTADSLHVGHFLQMMVMAHMQKAGHRPIALIGGGTAMVGDPTGRTDMRKMMTREEIKHNADCFKKQLSKFIEFGEGKAIMVDNADWLLDLNYIEFLRDIGVHFSVNRMLTAECFKSRLERGLSFIEFNYMLMQSYDFLKLYKEYGCIMQLGGDDQWSNILGGIDLIRRKEGKEVYGMTFTLLTTSEGKKMGKTEKGALWLDANKTSPYEFYQYWRNIHDADVIKCLKLLTFVPMEEIEEYAKLKDQEINIAKKRLAFEVTKLIHGEEEALNAQKTAEALFEKGASTDNMPTTEVASGELSNGINIIDLLLKTKLIPSKGEGRRLIEQGGISVNDVRVEGFDRLVTMDDFNNGELIIKKGKKTYHRVKLV</sequence>
<protein>
    <recommendedName>
        <fullName evidence="1">Tyrosine--tRNA ligase</fullName>
        <ecNumber evidence="1">6.1.1.1</ecNumber>
    </recommendedName>
    <alternativeName>
        <fullName evidence="1">Tyrosyl-tRNA synthetase</fullName>
        <shortName evidence="1">TyrRS</shortName>
    </alternativeName>
</protein>
<accession>A3DDC9</accession>
<dbReference type="EC" id="6.1.1.1" evidence="1"/>
<dbReference type="EMBL" id="CP000568">
    <property type="protein sequence ID" value="ABN51958.1"/>
    <property type="molecule type" value="Genomic_DNA"/>
</dbReference>
<dbReference type="RefSeq" id="WP_003516241.1">
    <property type="nucleotide sequence ID" value="NC_009012.1"/>
</dbReference>
<dbReference type="SMR" id="A3DDC9"/>
<dbReference type="STRING" id="203119.Cthe_0723"/>
<dbReference type="GeneID" id="35802951"/>
<dbReference type="KEGG" id="cth:Cthe_0723"/>
<dbReference type="eggNOG" id="COG0162">
    <property type="taxonomic scope" value="Bacteria"/>
</dbReference>
<dbReference type="HOGENOM" id="CLU_024003_0_3_9"/>
<dbReference type="OrthoDB" id="9804243at2"/>
<dbReference type="Proteomes" id="UP000002145">
    <property type="component" value="Chromosome"/>
</dbReference>
<dbReference type="GO" id="GO:0005829">
    <property type="term" value="C:cytosol"/>
    <property type="evidence" value="ECO:0007669"/>
    <property type="project" value="TreeGrafter"/>
</dbReference>
<dbReference type="GO" id="GO:0005524">
    <property type="term" value="F:ATP binding"/>
    <property type="evidence" value="ECO:0007669"/>
    <property type="project" value="UniProtKB-UniRule"/>
</dbReference>
<dbReference type="GO" id="GO:0003723">
    <property type="term" value="F:RNA binding"/>
    <property type="evidence" value="ECO:0007669"/>
    <property type="project" value="UniProtKB-KW"/>
</dbReference>
<dbReference type="GO" id="GO:0004831">
    <property type="term" value="F:tyrosine-tRNA ligase activity"/>
    <property type="evidence" value="ECO:0007669"/>
    <property type="project" value="UniProtKB-UniRule"/>
</dbReference>
<dbReference type="GO" id="GO:0006437">
    <property type="term" value="P:tyrosyl-tRNA aminoacylation"/>
    <property type="evidence" value="ECO:0007669"/>
    <property type="project" value="UniProtKB-UniRule"/>
</dbReference>
<dbReference type="CDD" id="cd00165">
    <property type="entry name" value="S4"/>
    <property type="match status" value="1"/>
</dbReference>
<dbReference type="CDD" id="cd00805">
    <property type="entry name" value="TyrRS_core"/>
    <property type="match status" value="1"/>
</dbReference>
<dbReference type="FunFam" id="1.10.240.10:FF:000001">
    <property type="entry name" value="Tyrosine--tRNA ligase"/>
    <property type="match status" value="1"/>
</dbReference>
<dbReference type="FunFam" id="3.40.50.620:FF:000008">
    <property type="entry name" value="Tyrosine--tRNA ligase"/>
    <property type="match status" value="1"/>
</dbReference>
<dbReference type="Gene3D" id="3.40.50.620">
    <property type="entry name" value="HUPs"/>
    <property type="match status" value="1"/>
</dbReference>
<dbReference type="Gene3D" id="3.10.290.10">
    <property type="entry name" value="RNA-binding S4 domain"/>
    <property type="match status" value="1"/>
</dbReference>
<dbReference type="Gene3D" id="1.10.240.10">
    <property type="entry name" value="Tyrosyl-Transfer RNA Synthetase"/>
    <property type="match status" value="1"/>
</dbReference>
<dbReference type="HAMAP" id="MF_02006">
    <property type="entry name" value="Tyr_tRNA_synth_type1"/>
    <property type="match status" value="1"/>
</dbReference>
<dbReference type="InterPro" id="IPR001412">
    <property type="entry name" value="aa-tRNA-synth_I_CS"/>
</dbReference>
<dbReference type="InterPro" id="IPR002305">
    <property type="entry name" value="aa-tRNA-synth_Ic"/>
</dbReference>
<dbReference type="InterPro" id="IPR014729">
    <property type="entry name" value="Rossmann-like_a/b/a_fold"/>
</dbReference>
<dbReference type="InterPro" id="IPR036986">
    <property type="entry name" value="S4_RNA-bd_sf"/>
</dbReference>
<dbReference type="InterPro" id="IPR054608">
    <property type="entry name" value="SYY-like_C"/>
</dbReference>
<dbReference type="InterPro" id="IPR002307">
    <property type="entry name" value="Tyr-tRNA-ligase"/>
</dbReference>
<dbReference type="InterPro" id="IPR024088">
    <property type="entry name" value="Tyr-tRNA-ligase_bac-type"/>
</dbReference>
<dbReference type="InterPro" id="IPR024107">
    <property type="entry name" value="Tyr-tRNA-ligase_bac_1"/>
</dbReference>
<dbReference type="NCBIfam" id="TIGR00234">
    <property type="entry name" value="tyrS"/>
    <property type="match status" value="1"/>
</dbReference>
<dbReference type="PANTHER" id="PTHR11766:SF0">
    <property type="entry name" value="TYROSINE--TRNA LIGASE, MITOCHONDRIAL"/>
    <property type="match status" value="1"/>
</dbReference>
<dbReference type="PANTHER" id="PTHR11766">
    <property type="entry name" value="TYROSYL-TRNA SYNTHETASE"/>
    <property type="match status" value="1"/>
</dbReference>
<dbReference type="Pfam" id="PF22421">
    <property type="entry name" value="SYY_C-terminal"/>
    <property type="match status" value="1"/>
</dbReference>
<dbReference type="Pfam" id="PF00579">
    <property type="entry name" value="tRNA-synt_1b"/>
    <property type="match status" value="1"/>
</dbReference>
<dbReference type="PRINTS" id="PR01040">
    <property type="entry name" value="TRNASYNTHTYR"/>
</dbReference>
<dbReference type="SUPFAM" id="SSF55174">
    <property type="entry name" value="Alpha-L RNA-binding motif"/>
    <property type="match status" value="1"/>
</dbReference>
<dbReference type="SUPFAM" id="SSF52374">
    <property type="entry name" value="Nucleotidylyl transferase"/>
    <property type="match status" value="1"/>
</dbReference>
<dbReference type="PROSITE" id="PS00178">
    <property type="entry name" value="AA_TRNA_LIGASE_I"/>
    <property type="match status" value="1"/>
</dbReference>
<dbReference type="PROSITE" id="PS50889">
    <property type="entry name" value="S4"/>
    <property type="match status" value="1"/>
</dbReference>
<reference key="1">
    <citation type="submission" date="2007-02" db="EMBL/GenBank/DDBJ databases">
        <title>Complete sequence of Clostridium thermocellum ATCC 27405.</title>
        <authorList>
            <consortium name="US DOE Joint Genome Institute"/>
            <person name="Copeland A."/>
            <person name="Lucas S."/>
            <person name="Lapidus A."/>
            <person name="Barry K."/>
            <person name="Detter J.C."/>
            <person name="Glavina del Rio T."/>
            <person name="Hammon N."/>
            <person name="Israni S."/>
            <person name="Dalin E."/>
            <person name="Tice H."/>
            <person name="Pitluck S."/>
            <person name="Chertkov O."/>
            <person name="Brettin T."/>
            <person name="Bruce D."/>
            <person name="Han C."/>
            <person name="Tapia R."/>
            <person name="Gilna P."/>
            <person name="Schmutz J."/>
            <person name="Larimer F."/>
            <person name="Land M."/>
            <person name="Hauser L."/>
            <person name="Kyrpides N."/>
            <person name="Mikhailova N."/>
            <person name="Wu J.H.D."/>
            <person name="Newcomb M."/>
            <person name="Richardson P."/>
        </authorList>
    </citation>
    <scope>NUCLEOTIDE SEQUENCE [LARGE SCALE GENOMIC DNA]</scope>
    <source>
        <strain>ATCC 27405 / DSM 1237 / JCM 9322 / NBRC 103400 / NCIMB 10682 / NRRL B-4536 / VPI 7372</strain>
    </source>
</reference>
<name>SYY_ACET2</name>
<feature type="chain" id="PRO_1000189284" description="Tyrosine--tRNA ligase">
    <location>
        <begin position="1"/>
        <end position="408"/>
    </location>
</feature>
<feature type="domain" description="S4 RNA-binding" evidence="1">
    <location>
        <begin position="342"/>
        <end position="407"/>
    </location>
</feature>
<feature type="short sequence motif" description="'HIGH' region">
    <location>
        <begin position="40"/>
        <end position="49"/>
    </location>
</feature>
<feature type="short sequence motif" description="'KMSKS' region">
    <location>
        <begin position="228"/>
        <end position="232"/>
    </location>
</feature>
<feature type="binding site" evidence="1">
    <location>
        <position position="35"/>
    </location>
    <ligand>
        <name>L-tyrosine</name>
        <dbReference type="ChEBI" id="CHEBI:58315"/>
    </ligand>
</feature>
<feature type="binding site" evidence="1">
    <location>
        <position position="168"/>
    </location>
    <ligand>
        <name>L-tyrosine</name>
        <dbReference type="ChEBI" id="CHEBI:58315"/>
    </ligand>
</feature>
<feature type="binding site" evidence="1">
    <location>
        <position position="172"/>
    </location>
    <ligand>
        <name>L-tyrosine</name>
        <dbReference type="ChEBI" id="CHEBI:58315"/>
    </ligand>
</feature>
<feature type="binding site" evidence="1">
    <location>
        <position position="231"/>
    </location>
    <ligand>
        <name>ATP</name>
        <dbReference type="ChEBI" id="CHEBI:30616"/>
    </ligand>
</feature>
<evidence type="ECO:0000255" key="1">
    <source>
        <dbReference type="HAMAP-Rule" id="MF_02006"/>
    </source>
</evidence>
<gene>
    <name evidence="1" type="primary">tyrS</name>
    <name type="ordered locus">Cthe_0723</name>
</gene>
<keyword id="KW-0030">Aminoacyl-tRNA synthetase</keyword>
<keyword id="KW-0067">ATP-binding</keyword>
<keyword id="KW-0963">Cytoplasm</keyword>
<keyword id="KW-0436">Ligase</keyword>
<keyword id="KW-0547">Nucleotide-binding</keyword>
<keyword id="KW-0648">Protein biosynthesis</keyword>
<keyword id="KW-1185">Reference proteome</keyword>
<keyword id="KW-0694">RNA-binding</keyword>